<protein>
    <recommendedName>
        <fullName evidence="9">Ribonuclease TUDOR 2</fullName>
        <shortName evidence="9">AtTudor2</shortName>
        <shortName evidence="9">TUDOR-SN protein 2</shortName>
        <ecNumber evidence="7">3.1.-.-</ecNumber>
    </recommendedName>
    <alternativeName>
        <fullName>100 kDa coactivator-like protein</fullName>
    </alternativeName>
</protein>
<gene>
    <name evidence="9" type="primary">TSN2</name>
    <name evidence="11" type="ordered locus">At5g61780</name>
    <name evidence="12" type="ORF">MAC9.10</name>
</gene>
<organism>
    <name type="scientific">Arabidopsis thaliana</name>
    <name type="common">Mouse-ear cress</name>
    <dbReference type="NCBI Taxonomy" id="3702"/>
    <lineage>
        <taxon>Eukaryota</taxon>
        <taxon>Viridiplantae</taxon>
        <taxon>Streptophyta</taxon>
        <taxon>Embryophyta</taxon>
        <taxon>Tracheophyta</taxon>
        <taxon>Spermatophyta</taxon>
        <taxon>Magnoliopsida</taxon>
        <taxon>eudicotyledons</taxon>
        <taxon>Gunneridae</taxon>
        <taxon>Pentapetalae</taxon>
        <taxon>rosids</taxon>
        <taxon>malvids</taxon>
        <taxon>Brassicales</taxon>
        <taxon>Brassicaceae</taxon>
        <taxon>Camelineae</taxon>
        <taxon>Arabidopsis</taxon>
    </lineage>
</organism>
<dbReference type="EC" id="3.1.-.-" evidence="7"/>
<dbReference type="EMBL" id="AB010069">
    <property type="protein sequence ID" value="BAB10078.1"/>
    <property type="molecule type" value="Genomic_DNA"/>
</dbReference>
<dbReference type="EMBL" id="CP002688">
    <property type="protein sequence ID" value="AED97517.1"/>
    <property type="molecule type" value="Genomic_DNA"/>
</dbReference>
<dbReference type="EMBL" id="BT002044">
    <property type="protein sequence ID" value="AAN72055.1"/>
    <property type="molecule type" value="mRNA"/>
</dbReference>
<dbReference type="EMBL" id="AK226659">
    <property type="protein sequence ID" value="BAE98767.1"/>
    <property type="molecule type" value="mRNA"/>
</dbReference>
<dbReference type="EMBL" id="AK230034">
    <property type="protein sequence ID" value="BAF01856.1"/>
    <property type="molecule type" value="mRNA"/>
</dbReference>
<dbReference type="EMBL" id="AK230048">
    <property type="protein sequence ID" value="BAF01870.1"/>
    <property type="molecule type" value="mRNA"/>
</dbReference>
<dbReference type="SMR" id="Q9FLT0"/>
<dbReference type="FunCoup" id="Q9FLT0">
    <property type="interactions" value="4137"/>
</dbReference>
<dbReference type="STRING" id="3702.Q9FLT0"/>
<dbReference type="GlyGen" id="Q9FLT0">
    <property type="glycosylation" value="1 site"/>
</dbReference>
<dbReference type="iPTMnet" id="Q9FLT0"/>
<dbReference type="MetOSite" id="Q9FLT0"/>
<dbReference type="PaxDb" id="3702-AT5G61780.1"/>
<dbReference type="ProteomicsDB" id="234649"/>
<dbReference type="EnsemblPlants" id="AT5G61780.1">
    <property type="protein sequence ID" value="AT5G61780.1"/>
    <property type="gene ID" value="AT5G61780"/>
</dbReference>
<dbReference type="GeneID" id="836300"/>
<dbReference type="Gramene" id="AT5G61780.1">
    <property type="protein sequence ID" value="AT5G61780.1"/>
    <property type="gene ID" value="AT5G61780"/>
</dbReference>
<dbReference type="KEGG" id="ath:AT5G61780"/>
<dbReference type="Araport" id="AT5G61780"/>
<dbReference type="TAIR" id="AT5G61780">
    <property type="gene designation" value="TUDOR2"/>
</dbReference>
<dbReference type="eggNOG" id="KOG2039">
    <property type="taxonomic scope" value="Eukaryota"/>
</dbReference>
<dbReference type="HOGENOM" id="CLU_005966_2_0_1"/>
<dbReference type="InParanoid" id="Q9FLT0"/>
<dbReference type="OMA" id="ARCADHH"/>
<dbReference type="PhylomeDB" id="Q9FLT0"/>
<dbReference type="BRENDA" id="3.1.31.1">
    <property type="organism ID" value="399"/>
</dbReference>
<dbReference type="CD-CODE" id="24475C75">
    <property type="entry name" value="Stress granule"/>
</dbReference>
<dbReference type="CD-CODE" id="4299E36E">
    <property type="entry name" value="Nucleolus"/>
</dbReference>
<dbReference type="CD-CODE" id="60F64496">
    <property type="entry name" value="P-body"/>
</dbReference>
<dbReference type="PRO" id="PR:Q9FLT0"/>
<dbReference type="Proteomes" id="UP000006548">
    <property type="component" value="Chromosome 5"/>
</dbReference>
<dbReference type="ExpressionAtlas" id="Q9FLT0">
    <property type="expression patterns" value="baseline and differential"/>
</dbReference>
<dbReference type="GO" id="GO:0005737">
    <property type="term" value="C:cytoplasm"/>
    <property type="evidence" value="ECO:0000314"/>
    <property type="project" value="UniProtKB"/>
</dbReference>
<dbReference type="GO" id="GO:0010494">
    <property type="term" value="C:cytoplasmic stress granule"/>
    <property type="evidence" value="ECO:0000314"/>
    <property type="project" value="UniProtKB"/>
</dbReference>
<dbReference type="GO" id="GO:0005829">
    <property type="term" value="C:cytosol"/>
    <property type="evidence" value="ECO:0000314"/>
    <property type="project" value="TAIR"/>
</dbReference>
<dbReference type="GO" id="GO:0005783">
    <property type="term" value="C:endoplasmic reticulum"/>
    <property type="evidence" value="ECO:0000314"/>
    <property type="project" value="TAIR"/>
</dbReference>
<dbReference type="GO" id="GO:0005635">
    <property type="term" value="C:nuclear envelope"/>
    <property type="evidence" value="ECO:0000314"/>
    <property type="project" value="TAIR"/>
</dbReference>
<dbReference type="GO" id="GO:0000932">
    <property type="term" value="C:P-body"/>
    <property type="evidence" value="ECO:0000314"/>
    <property type="project" value="TAIR"/>
</dbReference>
<dbReference type="GO" id="GO:0048471">
    <property type="term" value="C:perinuclear region of cytoplasm"/>
    <property type="evidence" value="ECO:0007669"/>
    <property type="project" value="UniProtKB-SubCell"/>
</dbReference>
<dbReference type="GO" id="GO:0009506">
    <property type="term" value="C:plasmodesma"/>
    <property type="evidence" value="ECO:0007005"/>
    <property type="project" value="TAIR"/>
</dbReference>
<dbReference type="GO" id="GO:0009536">
    <property type="term" value="C:plastid"/>
    <property type="evidence" value="ECO:0007005"/>
    <property type="project" value="TAIR"/>
</dbReference>
<dbReference type="GO" id="GO:0031332">
    <property type="term" value="C:RNAi effector complex"/>
    <property type="evidence" value="ECO:0007669"/>
    <property type="project" value="InterPro"/>
</dbReference>
<dbReference type="GO" id="GO:0003729">
    <property type="term" value="F:mRNA binding"/>
    <property type="evidence" value="ECO:0000314"/>
    <property type="project" value="TAIR"/>
</dbReference>
<dbReference type="GO" id="GO:0004518">
    <property type="term" value="F:nuclease activity"/>
    <property type="evidence" value="ECO:0007669"/>
    <property type="project" value="UniProtKB-KW"/>
</dbReference>
<dbReference type="GO" id="GO:0003723">
    <property type="term" value="F:RNA binding"/>
    <property type="evidence" value="ECO:0000314"/>
    <property type="project" value="UniProtKB"/>
</dbReference>
<dbReference type="GO" id="GO:0034605">
    <property type="term" value="P:cellular response to heat"/>
    <property type="evidence" value="ECO:0000314"/>
    <property type="project" value="UniProtKB"/>
</dbReference>
<dbReference type="GO" id="GO:0009686">
    <property type="term" value="P:gibberellin biosynthetic process"/>
    <property type="evidence" value="ECO:0000315"/>
    <property type="project" value="TAIR"/>
</dbReference>
<dbReference type="GO" id="GO:0006402">
    <property type="term" value="P:mRNA catabolic process"/>
    <property type="evidence" value="ECO:0000315"/>
    <property type="project" value="UniProtKB"/>
</dbReference>
<dbReference type="GO" id="GO:0006397">
    <property type="term" value="P:mRNA processing"/>
    <property type="evidence" value="ECO:0000315"/>
    <property type="project" value="UniProtKB"/>
</dbReference>
<dbReference type="GO" id="GO:0010372">
    <property type="term" value="P:positive regulation of gibberellin biosynthetic process"/>
    <property type="evidence" value="ECO:0000315"/>
    <property type="project" value="UniProtKB"/>
</dbReference>
<dbReference type="GO" id="GO:0031047">
    <property type="term" value="P:regulatory ncRNA-mediated gene silencing"/>
    <property type="evidence" value="ECO:0007669"/>
    <property type="project" value="InterPro"/>
</dbReference>
<dbReference type="GO" id="GO:0046686">
    <property type="term" value="P:response to cadmium ion"/>
    <property type="evidence" value="ECO:0000270"/>
    <property type="project" value="TAIR"/>
</dbReference>
<dbReference type="GO" id="GO:0009651">
    <property type="term" value="P:response to salt stress"/>
    <property type="evidence" value="ECO:0000316"/>
    <property type="project" value="TAIR"/>
</dbReference>
<dbReference type="GO" id="GO:0009845">
    <property type="term" value="P:seed germination"/>
    <property type="evidence" value="ECO:0000315"/>
    <property type="project" value="TAIR"/>
</dbReference>
<dbReference type="CDD" id="cd20443">
    <property type="entry name" value="Tudor_AtTudor1-like"/>
    <property type="match status" value="1"/>
</dbReference>
<dbReference type="FunFam" id="2.40.50.90:FF:000010">
    <property type="entry name" value="Ribonuclease"/>
    <property type="match status" value="1"/>
</dbReference>
<dbReference type="FunFam" id="2.40.50.90:FF:000011">
    <property type="entry name" value="Ribonuclease"/>
    <property type="match status" value="1"/>
</dbReference>
<dbReference type="FunFam" id="2.40.50.90:FF:000015">
    <property type="entry name" value="Ribonuclease"/>
    <property type="match status" value="1"/>
</dbReference>
<dbReference type="FunFam" id="2.40.50.90:FF:000018">
    <property type="entry name" value="Ribonuclease"/>
    <property type="match status" value="1"/>
</dbReference>
<dbReference type="FunFam" id="2.30.30.140:FF:000018">
    <property type="entry name" value="Serine/threonine-protein kinase 31"/>
    <property type="match status" value="1"/>
</dbReference>
<dbReference type="Gene3D" id="2.30.30.140">
    <property type="match status" value="1"/>
</dbReference>
<dbReference type="Gene3D" id="2.40.50.90">
    <property type="match status" value="5"/>
</dbReference>
<dbReference type="InterPro" id="IPR016685">
    <property type="entry name" value="Silence_cplx_Nase-comp_TudorSN"/>
</dbReference>
<dbReference type="InterPro" id="IPR035437">
    <property type="entry name" value="SNase_OB-fold_sf"/>
</dbReference>
<dbReference type="InterPro" id="IPR016071">
    <property type="entry name" value="Staphylococal_nuclease_OB-fold"/>
</dbReference>
<dbReference type="InterPro" id="IPR002999">
    <property type="entry name" value="Tudor"/>
</dbReference>
<dbReference type="InterPro" id="IPR047395">
    <property type="entry name" value="Tudor_AtTudor1-like"/>
</dbReference>
<dbReference type="PANTHER" id="PTHR12302">
    <property type="entry name" value="EBNA2 BINDING PROTEIN P100"/>
    <property type="match status" value="1"/>
</dbReference>
<dbReference type="PANTHER" id="PTHR12302:SF2">
    <property type="entry name" value="STAPHYLOCOCCAL NUCLEASE DOMAIN-CONTAINING PROTEIN 1"/>
    <property type="match status" value="1"/>
</dbReference>
<dbReference type="Pfam" id="PF00565">
    <property type="entry name" value="SNase"/>
    <property type="match status" value="4"/>
</dbReference>
<dbReference type="Pfam" id="PF00567">
    <property type="entry name" value="TUDOR"/>
    <property type="match status" value="1"/>
</dbReference>
<dbReference type="PIRSF" id="PIRSF017179">
    <property type="entry name" value="RISC-Tudor-SN"/>
    <property type="match status" value="1"/>
</dbReference>
<dbReference type="SMART" id="SM00318">
    <property type="entry name" value="SNc"/>
    <property type="match status" value="4"/>
</dbReference>
<dbReference type="SMART" id="SM00333">
    <property type="entry name" value="TUDOR"/>
    <property type="match status" value="1"/>
</dbReference>
<dbReference type="SUPFAM" id="SSF50199">
    <property type="entry name" value="Staphylococcal nuclease"/>
    <property type="match status" value="5"/>
</dbReference>
<dbReference type="SUPFAM" id="SSF63748">
    <property type="entry name" value="Tudor/PWWP/MBT"/>
    <property type="match status" value="1"/>
</dbReference>
<dbReference type="PROSITE" id="PS50830">
    <property type="entry name" value="TNASE_3"/>
    <property type="match status" value="4"/>
</dbReference>
<dbReference type="PROSITE" id="PS50304">
    <property type="entry name" value="TUDOR"/>
    <property type="match status" value="1"/>
</dbReference>
<reference key="1">
    <citation type="journal article" date="1998" name="DNA Res.">
        <title>Structural analysis of Arabidopsis thaliana chromosome 5. IV. Sequence features of the regions of 1,456,315 bp covered by nineteen physically assigned P1 and TAC clones.</title>
        <authorList>
            <person name="Sato S."/>
            <person name="Kaneko T."/>
            <person name="Kotani H."/>
            <person name="Nakamura Y."/>
            <person name="Asamizu E."/>
            <person name="Miyajima N."/>
            <person name="Tabata S."/>
        </authorList>
    </citation>
    <scope>NUCLEOTIDE SEQUENCE [LARGE SCALE GENOMIC DNA]</scope>
    <source>
        <strain>cv. Columbia</strain>
    </source>
</reference>
<reference key="2">
    <citation type="journal article" date="2017" name="Plant J.">
        <title>Araport11: a complete reannotation of the Arabidopsis thaliana reference genome.</title>
        <authorList>
            <person name="Cheng C.Y."/>
            <person name="Krishnakumar V."/>
            <person name="Chan A.P."/>
            <person name="Thibaud-Nissen F."/>
            <person name="Schobel S."/>
            <person name="Town C.D."/>
        </authorList>
    </citation>
    <scope>GENOME REANNOTATION</scope>
    <source>
        <strain>cv. Columbia</strain>
    </source>
</reference>
<reference key="3">
    <citation type="journal article" date="2003" name="Science">
        <title>Empirical analysis of transcriptional activity in the Arabidopsis genome.</title>
        <authorList>
            <person name="Yamada K."/>
            <person name="Lim J."/>
            <person name="Dale J.M."/>
            <person name="Chen H."/>
            <person name="Shinn P."/>
            <person name="Palm C.J."/>
            <person name="Southwick A.M."/>
            <person name="Wu H.C."/>
            <person name="Kim C.J."/>
            <person name="Nguyen M."/>
            <person name="Pham P.K."/>
            <person name="Cheuk R.F."/>
            <person name="Karlin-Newmann G."/>
            <person name="Liu S.X."/>
            <person name="Lam B."/>
            <person name="Sakano H."/>
            <person name="Wu T."/>
            <person name="Yu G."/>
            <person name="Miranda M."/>
            <person name="Quach H.L."/>
            <person name="Tripp M."/>
            <person name="Chang C.H."/>
            <person name="Lee J.M."/>
            <person name="Toriumi M.J."/>
            <person name="Chan M.M."/>
            <person name="Tang C.C."/>
            <person name="Onodera C.S."/>
            <person name="Deng J.M."/>
            <person name="Akiyama K."/>
            <person name="Ansari Y."/>
            <person name="Arakawa T."/>
            <person name="Banh J."/>
            <person name="Banno F."/>
            <person name="Bowser L."/>
            <person name="Brooks S.Y."/>
            <person name="Carninci P."/>
            <person name="Chao Q."/>
            <person name="Choy N."/>
            <person name="Enju A."/>
            <person name="Goldsmith A.D."/>
            <person name="Gurjal M."/>
            <person name="Hansen N.F."/>
            <person name="Hayashizaki Y."/>
            <person name="Johnson-Hopson C."/>
            <person name="Hsuan V.W."/>
            <person name="Iida K."/>
            <person name="Karnes M."/>
            <person name="Khan S."/>
            <person name="Koesema E."/>
            <person name="Ishida J."/>
            <person name="Jiang P.X."/>
            <person name="Jones T."/>
            <person name="Kawai J."/>
            <person name="Kamiya A."/>
            <person name="Meyers C."/>
            <person name="Nakajima M."/>
            <person name="Narusaka M."/>
            <person name="Seki M."/>
            <person name="Sakurai T."/>
            <person name="Satou M."/>
            <person name="Tamse R."/>
            <person name="Vaysberg M."/>
            <person name="Wallender E.K."/>
            <person name="Wong C."/>
            <person name="Yamamura Y."/>
            <person name="Yuan S."/>
            <person name="Shinozaki K."/>
            <person name="Davis R.W."/>
            <person name="Theologis A."/>
            <person name="Ecker J.R."/>
        </authorList>
    </citation>
    <scope>NUCLEOTIDE SEQUENCE [LARGE SCALE MRNA]</scope>
    <source>
        <strain>cv. Columbia</strain>
    </source>
</reference>
<reference key="4">
    <citation type="submission" date="2006-07" db="EMBL/GenBank/DDBJ databases">
        <title>Large-scale analysis of RIKEN Arabidopsis full-length (RAFL) cDNAs.</title>
        <authorList>
            <person name="Totoki Y."/>
            <person name="Seki M."/>
            <person name="Ishida J."/>
            <person name="Nakajima M."/>
            <person name="Enju A."/>
            <person name="Kamiya A."/>
            <person name="Narusaka M."/>
            <person name="Shin-i T."/>
            <person name="Nakagawa M."/>
            <person name="Sakamoto N."/>
            <person name="Oishi K."/>
            <person name="Kohara Y."/>
            <person name="Kobayashi M."/>
            <person name="Toyoda A."/>
            <person name="Sakaki Y."/>
            <person name="Sakurai T."/>
            <person name="Iida K."/>
            <person name="Akiyama K."/>
            <person name="Satou M."/>
            <person name="Toyoda T."/>
            <person name="Konagaya A."/>
            <person name="Carninci P."/>
            <person name="Kawai J."/>
            <person name="Hayashizaki Y."/>
            <person name="Shinozaki K."/>
        </authorList>
    </citation>
    <scope>NUCLEOTIDE SEQUENCE [LARGE SCALE MRNA] OF 1-347 AND 374-985</scope>
    <source>
        <strain>cv. Columbia</strain>
    </source>
</reference>
<reference key="5">
    <citation type="journal article" date="2008" name="J. Proteome Res.">
        <title>Site-specific phosphorylation profiling of Arabidopsis proteins by mass spectrometry and peptide chip analysis.</title>
        <authorList>
            <person name="de la Fuente van Bentem S."/>
            <person name="Anrather D."/>
            <person name="Dohnal I."/>
            <person name="Roitinger E."/>
            <person name="Csaszar E."/>
            <person name="Joore J."/>
            <person name="Buijnink J."/>
            <person name="Carreri A."/>
            <person name="Forzani C."/>
            <person name="Lorkovic Z.J."/>
            <person name="Barta A."/>
            <person name="Lecourieux D."/>
            <person name="Verhounig A."/>
            <person name="Jonak C."/>
            <person name="Hirt H."/>
        </authorList>
    </citation>
    <scope>PHOSPHORYLATION [LARGE SCALE ANALYSIS] AT SER-971</scope>
    <scope>IDENTIFICATION BY MASS SPECTROMETRY [LARGE SCALE ANALYSIS]</scope>
    <source>
        <tissue>Root</tissue>
    </source>
</reference>
<reference key="6">
    <citation type="journal article" date="2009" name="J. Proteomics">
        <title>Phosphoproteomic analysis of nuclei-enriched fractions from Arabidopsis thaliana.</title>
        <authorList>
            <person name="Jones A.M.E."/>
            <person name="MacLean D."/>
            <person name="Studholme D.J."/>
            <person name="Serna-Sanz A."/>
            <person name="Andreasson E."/>
            <person name="Rathjen J.P."/>
            <person name="Peck S.C."/>
        </authorList>
    </citation>
    <scope>PHOSPHORYLATION [LARGE SCALE ANALYSIS] AT THR-961; TYR-966 AND SER-971</scope>
    <scope>IDENTIFICATION BY MASS SPECTROMETRY [LARGE SCALE ANALYSIS]</scope>
    <source>
        <strain>cv. Columbia</strain>
    </source>
</reference>
<reference key="7">
    <citation type="journal article" date="2009" name="Plant Physiol.">
        <title>Large-scale Arabidopsis phosphoproteome profiling reveals novel chloroplast kinase substrates and phosphorylation networks.</title>
        <authorList>
            <person name="Reiland S."/>
            <person name="Messerli G."/>
            <person name="Baerenfaller K."/>
            <person name="Gerrits B."/>
            <person name="Endler A."/>
            <person name="Grossmann J."/>
            <person name="Gruissem W."/>
            <person name="Baginsky S."/>
        </authorList>
    </citation>
    <scope>PHOSPHORYLATION [LARGE SCALE ANALYSIS] AT SER-971</scope>
    <scope>IDENTIFICATION BY MASS SPECTROMETRY [LARGE SCALE ANALYSIS]</scope>
</reference>
<reference key="8">
    <citation type="journal article" date="2010" name="Planta">
        <title>The AtTudor2, a protein with SN-Tudor domains, is involved in control of seed germination in Arabidopsis.</title>
        <authorList>
            <person name="Liu S."/>
            <person name="Jia J."/>
            <person name="Gao Y."/>
            <person name="Zhang B."/>
            <person name="Han Y."/>
        </authorList>
    </citation>
    <scope>FUNCTION</scope>
    <scope>DISRUPTION PHENOTYPE</scope>
    <scope>TISSUE SPECIFICITY</scope>
    <scope>DEVELOPMENTAL STAGE</scope>
    <scope>GENE FAMILY</scope>
    <scope>NOMENCLATURE</scope>
    <source>
        <strain>cv. Columbia</strain>
    </source>
</reference>
<reference key="9">
    <citation type="journal article" date="2010" name="Plant Cell">
        <title>The RNA binding protein Tudor-SN is essential for stress tolerance and stabilizes levels of stress-responsive mRNAs encoding secreted proteins in Arabidopsis.</title>
        <authorList>
            <person name="Frei dit Frey N."/>
            <person name="Muller P."/>
            <person name="Jammes F."/>
            <person name="Kizis D."/>
            <person name="Leung J."/>
            <person name="Perrot-Rechenmann C."/>
            <person name="Bianchi M.W."/>
        </authorList>
    </citation>
    <scope>FUNCTION</scope>
    <scope>DISRUPTION PHENOTYPE</scope>
    <scope>SUBCELLULAR LOCATION</scope>
    <scope>TISSUE SPECIFICITY</scope>
    <source>
        <strain>cv. Columbia</strain>
    </source>
</reference>
<reference key="10">
    <citation type="journal article" date="2012" name="Mol. Cell. Proteomics">
        <title>Comparative large-scale characterisation of plant vs. mammal proteins reveals similar and idiosyncratic N-alpha acetylation features.</title>
        <authorList>
            <person name="Bienvenut W.V."/>
            <person name="Sumpton D."/>
            <person name="Martinez A."/>
            <person name="Lilla S."/>
            <person name="Espagne C."/>
            <person name="Meinnel T."/>
            <person name="Giglione C."/>
        </authorList>
    </citation>
    <scope>ACETYLATION [LARGE SCALE ANALYSIS] AT ALA-2</scope>
    <scope>CLEAVAGE OF INITIATOR METHIONINE [LARGE SCALE ANALYSIS]</scope>
    <scope>IDENTIFICATION BY MASS SPECTROMETRY [LARGE SCALE ANALYSIS]</scope>
</reference>
<reference key="11">
    <citation type="journal article" date="2015" name="Plant Cell">
        <title>Tudor staphylococcal nuclease links formation of stress granules and processing bodies with mRNA catabolism in Arabidopsis.</title>
        <authorList>
            <person name="Gutierrez-Beltran E."/>
            <person name="Moschou P.N."/>
            <person name="Smertenko A.P."/>
            <person name="Bozhkov P.V."/>
        </authorList>
    </citation>
    <scope>FUNCTION</scope>
    <scope>DISRUPTION PHENOTYPE</scope>
    <scope>SUBCELLULAR LOCATION</scope>
    <scope>DOMAIN</scope>
    <scope>ACTIVITY REGULATION</scope>
    <source>
        <strain>cv. Columbia</strain>
    </source>
</reference>
<reference key="12">
    <citation type="journal article" date="2015" name="Plant Signal. Behav.">
        <title>Tudor staphylococcal nuclease plays two antagonistic roles in RNA metabolism under stress.</title>
        <authorList>
            <person name="Gutierrez-Beltran E."/>
            <person name="Bozhkov P.V."/>
            <person name="Moschou P.N."/>
        </authorList>
    </citation>
    <scope>FUNCTION</scope>
    <scope>DISRUPTION PHENOTYPE</scope>
    <source>
        <strain>cv. Columbia</strain>
        <strain>cv. Landsberg erecta</strain>
    </source>
</reference>
<comment type="function">
    <text evidence="1 5 6 7 8">Cytoprotective ribonuclease (RNase) required for resistance to abiotic stresses, acting as a positive regulator of mRNA decapping during stress (PubMed:25736060). Essential for the integrity and function of cytoplasmic messenger ribonucleoprotein (mRNP) complexes called stress granules (SGs) and processing bodies (PBs), sites of post-transcriptional gene regulation during stress (e.g. salt and heat) (PubMed:25736060). Involved in gibberellic acid (GA) biosynthesis and seed germination (PubMed:20396901). Essential for stress tolerance, probably by regulating mRNAs entering the secretory pathway (PubMed:20484005). Component of stress granules (SGs) that regulates growth under salt stress by modulating levels of GA20OX3 mRNA. Binds GA20OX3 mRNA (By similarity). May inhibit the degradation of mRNAs involved in stress adaptation (PubMed:26237081).</text>
</comment>
<comment type="activity regulation">
    <text evidence="7">Repressed by the specific inhibitor 3',5'-deoxythymidine bisphosphate (pdTp); this RNase activity inhibition impairs subcellular relocation upon abiotic stress and leads to reduced stress resistance.</text>
</comment>
<comment type="subcellular location">
    <subcellularLocation>
        <location evidence="6 7">Cytoplasm</location>
    </subcellularLocation>
    <subcellularLocation>
        <location evidence="6">Cytoplasm</location>
        <location evidence="6">Perinuclear region</location>
    </subcellularLocation>
    <subcellularLocation>
        <location evidence="6">Endoplasmic reticulum</location>
    </subcellularLocation>
    <subcellularLocation>
        <location evidence="7">Cytoplasmic granule</location>
    </subcellularLocation>
    <text evidence="6 7">Accumulates heterogeneously in the cytosol, in patches around the nucleus and in the cell periphery, and relocates transiently to a diffuse pattern in response to salt stress (PubMed:20484005). Accumulates in cytoplasmic stress granules (SGs) and processing bodies (PBs) in response to abiotic stresses (e.g. salt and heat) (PubMed:25736060).</text>
</comment>
<comment type="tissue specificity">
    <text evidence="5 6">Mostly expressed in seeds, and, to a lower extent, in leaves, flowers, roots and siliques (at protein level) (PubMed:20396901, PubMed:20484005). Accumulates strongly in the cap and elongation zone of the root apices (at protein level) (PubMed:20484005).</text>
</comment>
<comment type="developmental stage">
    <text evidence="5">In mature seeds, accumulates highly both in cotyledons and radicals.</text>
</comment>
<comment type="domain">
    <text evidence="7">TNase-like domains are required for relocation to cytoplasmic foci upon abiotic stresses.</text>
</comment>
<comment type="disruption phenotype">
    <text evidence="5 6 7 8">Normal vegetative growth, flowering time and flower morphology, but delayed seed germination after vernalization (at 4 degrees Celsius); this phenotype is reversed by gibberellic acid (GA-3) but increased by paclobutrazol, a GA biosynthesis inhibitor. Reduced expression of enzyme involved in GA biosynthesis leading to reduced levels of GA-4 (e.g. GA20OX3) (PubMed:20396901). The double mutant tsn1 tsn2 exhibits severe alteration in germination, growth, and survival under high salinity stress. In normal conditions, moderate reduction in root growth due to cell elongation defect. Reduced levels of stress-regulated mRNAs encoding secreted proteins (PubMed:20484005). Abnormal stress granules (SGs) and processing bodies (PBs) assembly accompanied by reduced uncapped RNAs levels in heat-stressed double mutant tsn1 tsn2 (PubMed:25736060). The double mutant tsn1 tsn2 is also showing enriched uncapping and subsequent degradation of mRNAs involved in stress adaptation (PubMed:26237081).</text>
</comment>
<feature type="initiator methionine" description="Removed" evidence="16">
    <location>
        <position position="1"/>
    </location>
</feature>
<feature type="chain" id="PRO_0000437884" description="Ribonuclease TUDOR 2">
    <location>
        <begin position="2"/>
        <end position="985"/>
    </location>
</feature>
<feature type="domain" description="TNase-like 1" evidence="3">
    <location>
        <begin position="10"/>
        <end position="153"/>
    </location>
</feature>
<feature type="domain" description="TNase-like 2" evidence="3">
    <location>
        <begin position="188"/>
        <end position="368"/>
    </location>
</feature>
<feature type="domain" description="TNase-like 3" evidence="3">
    <location>
        <begin position="382"/>
        <end position="552"/>
    </location>
</feature>
<feature type="domain" description="TNase-like 4" evidence="3">
    <location>
        <begin position="582"/>
        <end position="711"/>
    </location>
</feature>
<feature type="domain" description="Tudor" evidence="2">
    <location>
        <begin position="778"/>
        <end position="843"/>
    </location>
</feature>
<feature type="region of interest" description="Disordered" evidence="4">
    <location>
        <begin position="228"/>
        <end position="255"/>
    </location>
</feature>
<feature type="region of interest" description="Disordered" evidence="4">
    <location>
        <begin position="963"/>
        <end position="985"/>
    </location>
</feature>
<feature type="modified residue" description="N-acetylalanine" evidence="16">
    <location>
        <position position="2"/>
    </location>
</feature>
<feature type="modified residue" description="Phosphothreonine" evidence="14">
    <location>
        <position position="961"/>
    </location>
</feature>
<feature type="modified residue" description="Phosphotyrosine" evidence="14">
    <location>
        <position position="966"/>
    </location>
</feature>
<feature type="modified residue" description="Phosphoserine" evidence="13 14 15">
    <location>
        <position position="971"/>
    </location>
</feature>
<feature type="sequence conflict" description="In Ref. 4; BAF01856." evidence="10" ref="4">
    <original>A</original>
    <variation>T</variation>
    <location>
        <position position="921"/>
    </location>
</feature>
<proteinExistence type="evidence at protein level"/>
<accession>Q9FLT0</accession>
<accession>Q0WLY7</accession>
<accession>Q0WM01</accession>
<accession>Q0WVT1</accession>
<evidence type="ECO:0000250" key="1">
    <source>
        <dbReference type="UniProtKB" id="Q8VZG7"/>
    </source>
</evidence>
<evidence type="ECO:0000255" key="2">
    <source>
        <dbReference type="PROSITE-ProRule" id="PRU00211"/>
    </source>
</evidence>
<evidence type="ECO:0000255" key="3">
    <source>
        <dbReference type="PROSITE-ProRule" id="PRU00272"/>
    </source>
</evidence>
<evidence type="ECO:0000256" key="4">
    <source>
        <dbReference type="SAM" id="MobiDB-lite"/>
    </source>
</evidence>
<evidence type="ECO:0000269" key="5">
    <source>
    </source>
</evidence>
<evidence type="ECO:0000269" key="6">
    <source>
    </source>
</evidence>
<evidence type="ECO:0000269" key="7">
    <source>
    </source>
</evidence>
<evidence type="ECO:0000269" key="8">
    <source>
    </source>
</evidence>
<evidence type="ECO:0000303" key="9">
    <source>
    </source>
</evidence>
<evidence type="ECO:0000305" key="10"/>
<evidence type="ECO:0000312" key="11">
    <source>
        <dbReference type="Araport" id="AT5G61780"/>
    </source>
</evidence>
<evidence type="ECO:0000312" key="12">
    <source>
        <dbReference type="EMBL" id="BAB10078.1"/>
    </source>
</evidence>
<evidence type="ECO:0007744" key="13">
    <source>
    </source>
</evidence>
<evidence type="ECO:0007744" key="14">
    <source>
    </source>
</evidence>
<evidence type="ECO:0007744" key="15">
    <source>
    </source>
</evidence>
<evidence type="ECO:0007744" key="16">
    <source>
    </source>
</evidence>
<sequence>MATGAATENQWLKGRVKAVTSGDCLVITALTHNRAGPPPEKTITLSSLMAPKMARRGGIDEPFAWESREFLRKLCIGKEVAFKVDYKVEAIAGREFGSVYLGNENLAKLVVQNGWAKVRRPGQQNQDKVSPYIAELEQLEEQAQQEGFGRWSKVPGAAEASIRNLPPSAVGDSGNFDAMGLLAASKGKPMEGIVEQVRDGSTIRVYLLPEFQFVQVFVAGLQAPSMGRRQSTQEAVVDPDVTATSNGDASAETRGPLTTAQRLAASAASSVEVSSDPFAMEAKYFTELRVLNRDVRIVLEGVDKFNNLIGSVYYSDGDTVKDLGLELVENGLAKYVEWSANMLDEEAKKKLKATELQCKKNRVKMWANYVPPASNSKAIHDQNFTGKVVEVVSGDCLVVADDSIPFGSPMAERRVCLSSIRSPKMGNPRREEKPAPYAREAKEFLRQKLIGMEVIVQMEYSRKISPGDGVTTSGAGDRVMDFGSVFLPSPTKGDTAVAAAATPGANIAELIISRGLGTVVRHRDFEERSNHYDALLAAEARAIAGKKNIHSAKDSPALHIADLTVASAKKAKDFLPSLQRINQISAVVEYVLSGHRFKLYIPKESCSIAFAFSGVRCPGRGEPYSEEAIALMRRKIMQRDVEIVVENVDRTGTFLGSMWEKNSKTNAGTYLLEAGLAKMQTGFGADRIPEAHILEMAERSAKNQKLKIWENYVEGEEVVNGSSKVETRQKETLKVVVTEVLGGGRFYVQTVGDQKVASIQNQLAALSLKDAPIIGSFNPKKGDIVLAQFSLDNSWNRAMIVNGPRGAVQSPEEEFEVFYIDYGNQEIVPYSAIRPVDPSVSSAPGLAQLCRLAYIKVPGKEEDFGRDAGEYLHTVTLESGKEFRAVVEERDTSGGKVKGQGTGTELVVTLIAVDDEISVNAAMLQEGIARMEKRRRWEPKDKQAALDALEKFQDEARKSRTGIWEYGDIQSDDEDNVPVRKPGRG</sequence>
<keyword id="KW-0007">Acetylation</keyword>
<keyword id="KW-0963">Cytoplasm</keyword>
<keyword id="KW-0256">Endoplasmic reticulum</keyword>
<keyword id="KW-0378">Hydrolase</keyword>
<keyword id="KW-0540">Nuclease</keyword>
<keyword id="KW-0597">Phosphoprotein</keyword>
<keyword id="KW-1185">Reference proteome</keyword>
<keyword id="KW-0677">Repeat</keyword>
<name>TSN2_ARATH</name>